<dbReference type="EC" id="7.1.1.9"/>
<dbReference type="EMBL" id="AF000023">
    <property type="protein sequence ID" value="AAC04629.1"/>
    <property type="molecule type" value="Genomic_DNA"/>
</dbReference>
<dbReference type="PIR" id="T11883">
    <property type="entry name" value="T11883"/>
</dbReference>
<dbReference type="SMR" id="O47491"/>
<dbReference type="CTD" id="4514"/>
<dbReference type="GO" id="GO:0005743">
    <property type="term" value="C:mitochondrial inner membrane"/>
    <property type="evidence" value="ECO:0007669"/>
    <property type="project" value="UniProtKB-SubCell"/>
</dbReference>
<dbReference type="GO" id="GO:0004129">
    <property type="term" value="F:cytochrome-c oxidase activity"/>
    <property type="evidence" value="ECO:0007669"/>
    <property type="project" value="UniProtKB-EC"/>
</dbReference>
<dbReference type="GO" id="GO:0006123">
    <property type="term" value="P:mitochondrial electron transport, cytochrome c to oxygen"/>
    <property type="evidence" value="ECO:0007669"/>
    <property type="project" value="TreeGrafter"/>
</dbReference>
<dbReference type="CDD" id="cd01665">
    <property type="entry name" value="Cyt_c_Oxidase_III"/>
    <property type="match status" value="1"/>
</dbReference>
<dbReference type="FunFam" id="1.20.120.80:FF:000002">
    <property type="entry name" value="Cytochrome c oxidase subunit 3"/>
    <property type="match status" value="1"/>
</dbReference>
<dbReference type="Gene3D" id="1.10.287.70">
    <property type="match status" value="1"/>
</dbReference>
<dbReference type="Gene3D" id="1.20.120.80">
    <property type="entry name" value="Cytochrome c oxidase, subunit III, four-helix bundle"/>
    <property type="match status" value="1"/>
</dbReference>
<dbReference type="InterPro" id="IPR024791">
    <property type="entry name" value="Cyt_c/ubiquinol_Oxase_su3"/>
</dbReference>
<dbReference type="InterPro" id="IPR033945">
    <property type="entry name" value="Cyt_c_oxase_su3_dom"/>
</dbReference>
<dbReference type="InterPro" id="IPR000298">
    <property type="entry name" value="Cyt_c_oxidase-like_su3"/>
</dbReference>
<dbReference type="InterPro" id="IPR035973">
    <property type="entry name" value="Cyt_c_oxidase_su3-like_sf"/>
</dbReference>
<dbReference type="InterPro" id="IPR013833">
    <property type="entry name" value="Cyt_c_oxidase_su3_a-hlx"/>
</dbReference>
<dbReference type="PANTHER" id="PTHR11403:SF7">
    <property type="entry name" value="CYTOCHROME C OXIDASE SUBUNIT 3"/>
    <property type="match status" value="1"/>
</dbReference>
<dbReference type="PANTHER" id="PTHR11403">
    <property type="entry name" value="CYTOCHROME C OXIDASE SUBUNIT III"/>
    <property type="match status" value="1"/>
</dbReference>
<dbReference type="Pfam" id="PF00510">
    <property type="entry name" value="COX3"/>
    <property type="match status" value="1"/>
</dbReference>
<dbReference type="SUPFAM" id="SSF81452">
    <property type="entry name" value="Cytochrome c oxidase subunit III-like"/>
    <property type="match status" value="1"/>
</dbReference>
<dbReference type="PROSITE" id="PS50253">
    <property type="entry name" value="COX3"/>
    <property type="match status" value="1"/>
</dbReference>
<geneLocation type="mitochondrion"/>
<organism>
    <name type="scientific">Metridium senile</name>
    <name type="common">Brown sea anemone</name>
    <name type="synonym">Frilled sea anemone</name>
    <dbReference type="NCBI Taxonomy" id="6116"/>
    <lineage>
        <taxon>Eukaryota</taxon>
        <taxon>Metazoa</taxon>
        <taxon>Cnidaria</taxon>
        <taxon>Anthozoa</taxon>
        <taxon>Hexacorallia</taxon>
        <taxon>Actiniaria</taxon>
        <taxon>Nynantheae</taxon>
        <taxon>Metridiidae</taxon>
        <taxon>Metridium</taxon>
    </lineage>
</organism>
<name>COX3_METSE</name>
<gene>
    <name type="primary">COIII</name>
</gene>
<comment type="function">
    <text evidence="1">Component of the cytochrome c oxidase, the last enzyme in the mitochondrial electron transport chain which drives oxidative phosphorylation. The respiratory chain contains 3 multisubunit complexes succinate dehydrogenase (complex II, CII), ubiquinol-cytochrome c oxidoreductase (cytochrome b-c1 complex, complex III, CIII) and cytochrome c oxidase (complex IV, CIV), that cooperate to transfer electrons derived from NADH and succinate to molecular oxygen, creating an electrochemical gradient over the inner membrane that drives transmembrane transport and the ATP synthase. Cytochrome c oxidase is the component of the respiratory chain that catalyzes the reduction of oxygen to water. Electrons originating from reduced cytochrome c in the intermembrane space (IMS) are transferred via the dinuclear copper A center (CU(A)) of subunit 2 and heme A of subunit 1 to the active site in subunit 1, a binuclear center (BNC) formed by heme A3 and copper B (CU(B)). The BNC reduces molecular oxygen to 2 water molecules using 4 electrons from cytochrome c in the IMS and 4 protons from the mitochondrial matrix.</text>
</comment>
<comment type="catalytic activity">
    <reaction evidence="1">
        <text>4 Fe(II)-[cytochrome c] + O2 + 8 H(+)(in) = 4 Fe(III)-[cytochrome c] + 2 H2O + 4 H(+)(out)</text>
        <dbReference type="Rhea" id="RHEA:11436"/>
        <dbReference type="Rhea" id="RHEA-COMP:10350"/>
        <dbReference type="Rhea" id="RHEA-COMP:14399"/>
        <dbReference type="ChEBI" id="CHEBI:15377"/>
        <dbReference type="ChEBI" id="CHEBI:15378"/>
        <dbReference type="ChEBI" id="CHEBI:15379"/>
        <dbReference type="ChEBI" id="CHEBI:29033"/>
        <dbReference type="ChEBI" id="CHEBI:29034"/>
        <dbReference type="EC" id="7.1.1.9"/>
    </reaction>
    <physiologicalReaction direction="left-to-right" evidence="1">
        <dbReference type="Rhea" id="RHEA:11437"/>
    </physiologicalReaction>
</comment>
<comment type="subunit">
    <text evidence="1">Component of the cytochrome c oxidase (complex IV, CIV), a multisubunit enzyme composed of a catalytic core of 3 subunits and several supernumerary subunits. The complex exists as a monomer or a dimer and forms supercomplexes (SCs) in the inner mitochondrial membrane with ubiquinol-cytochrome c oxidoreductase (cytochrome b-c1 complex, complex III, CIII).</text>
</comment>
<comment type="subcellular location">
    <subcellularLocation>
        <location evidence="1">Mitochondrion inner membrane</location>
        <topology evidence="1">Multi-pass membrane protein</topology>
    </subcellularLocation>
</comment>
<comment type="similarity">
    <text evidence="3">Belongs to the cytochrome c oxidase subunit 3 family.</text>
</comment>
<feature type="chain" id="PRO_0000183808" description="Cytochrome c oxidase subunit 3">
    <location>
        <begin position="1"/>
        <end position="262"/>
    </location>
</feature>
<feature type="transmembrane region" description="Helical" evidence="2">
    <location>
        <begin position="16"/>
        <end position="36"/>
    </location>
</feature>
<feature type="transmembrane region" description="Helical" evidence="2">
    <location>
        <begin position="39"/>
        <end position="59"/>
    </location>
</feature>
<feature type="transmembrane region" description="Helical" evidence="2">
    <location>
        <begin position="83"/>
        <end position="103"/>
    </location>
</feature>
<feature type="transmembrane region" description="Helical" evidence="2">
    <location>
        <begin position="128"/>
        <end position="148"/>
    </location>
</feature>
<feature type="transmembrane region" description="Helical" evidence="2">
    <location>
        <begin position="160"/>
        <end position="180"/>
    </location>
</feature>
<feature type="transmembrane region" description="Helical" evidence="2">
    <location>
        <begin position="198"/>
        <end position="218"/>
    </location>
</feature>
<feature type="transmembrane region" description="Helical" evidence="2">
    <location>
        <begin position="241"/>
        <end position="261"/>
    </location>
</feature>
<accession>O47491</accession>
<evidence type="ECO:0000250" key="1">
    <source>
        <dbReference type="UniProtKB" id="P00420"/>
    </source>
</evidence>
<evidence type="ECO:0000255" key="2"/>
<evidence type="ECO:0000305" key="3"/>
<keyword id="KW-0472">Membrane</keyword>
<keyword id="KW-0496">Mitochondrion</keyword>
<keyword id="KW-0999">Mitochondrion inner membrane</keyword>
<keyword id="KW-1278">Translocase</keyword>
<keyword id="KW-0812">Transmembrane</keyword>
<keyword id="KW-1133">Transmembrane helix</keyword>
<proteinExistence type="inferred from homology"/>
<sequence length="262" mass="29631">MKSTVYHPYHLVDPSPWPYVGACGALFITVGSVVYFHYSQTWVLLMGAITLSLTMIVWWRDVIREATFQGLHTMVVKQGLKYGMLLFILSEVLFFFSFFWAFFHSSIAPNIELGAVWPPQGINPLNPFSVPLLNTAVLLSSGATVTWAHHALISGKKTEAINGLTITVVLGLIFTGLQAMEYYEAPFAISDSVYGSTFFVATGFHGMHVIIGTTFLAVCLARLVYHQFTRHHHLGFEAASWYWHFVDVVWLFLYICIYWWGS</sequence>
<protein>
    <recommendedName>
        <fullName>Cytochrome c oxidase subunit 3</fullName>
        <ecNumber>7.1.1.9</ecNumber>
    </recommendedName>
    <alternativeName>
        <fullName>Cytochrome c oxidase polypeptide III</fullName>
    </alternativeName>
</protein>
<reference key="1">
    <citation type="submission" date="1997-04" db="EMBL/GenBank/DDBJ databases">
        <authorList>
            <person name="Beagley C.T."/>
            <person name="Okimoto R."/>
            <person name="Wolstenholme D.R."/>
        </authorList>
    </citation>
    <scope>NUCLEOTIDE SEQUENCE [GENOMIC DNA]</scope>
    <source>
        <strain>White morph</strain>
    </source>
</reference>